<sequence>MHIMEGYLPPMWCAVWWVLSGIVIAYGIVKLKKLLEESPEMKPLVAISGAYMFILSSLKMPSVTGSCSHPCGNGLGAVLFGVPITAVLAAIVLLFQALFLAHGGLTTLGANDFSMGIVGPAAAVIVYRLCMKAGLSSTVGIFFAALFGDWLTYVTTAVQLALAFPIPSFTAAFTKFIVIYAYTQVPLAIAEGILTVIIWDYIKKLRPDLLLKLGVVPEEELKPYLTPSPAGGE</sequence>
<organism>
    <name type="scientific">Methanocaldococcus jannaschii (strain ATCC 43067 / DSM 2661 / JAL-1 / JCM 10045 / NBRC 100440)</name>
    <name type="common">Methanococcus jannaschii</name>
    <dbReference type="NCBI Taxonomy" id="243232"/>
    <lineage>
        <taxon>Archaea</taxon>
        <taxon>Methanobacteriati</taxon>
        <taxon>Methanobacteriota</taxon>
        <taxon>Methanomada group</taxon>
        <taxon>Methanococci</taxon>
        <taxon>Methanococcales</taxon>
        <taxon>Methanocaldococcaceae</taxon>
        <taxon>Methanocaldococcus</taxon>
    </lineage>
</organism>
<accession>Q58491</accession>
<reference key="1">
    <citation type="journal article" date="1996" name="Science">
        <title>Complete genome sequence of the methanogenic archaeon, Methanococcus jannaschii.</title>
        <authorList>
            <person name="Bult C.J."/>
            <person name="White O."/>
            <person name="Olsen G.J."/>
            <person name="Zhou L."/>
            <person name="Fleischmann R.D."/>
            <person name="Sutton G.G."/>
            <person name="Blake J.A."/>
            <person name="FitzGerald L.M."/>
            <person name="Clayton R.A."/>
            <person name="Gocayne J.D."/>
            <person name="Kerlavage A.R."/>
            <person name="Dougherty B.A."/>
            <person name="Tomb J.-F."/>
            <person name="Adams M.D."/>
            <person name="Reich C.I."/>
            <person name="Overbeek R."/>
            <person name="Kirkness E.F."/>
            <person name="Weinstock K.G."/>
            <person name="Merrick J.M."/>
            <person name="Glodek A."/>
            <person name="Scott J.L."/>
            <person name="Geoghagen N.S.M."/>
            <person name="Weidman J.F."/>
            <person name="Fuhrmann J.L."/>
            <person name="Nguyen D."/>
            <person name="Utterback T.R."/>
            <person name="Kelley J.M."/>
            <person name="Peterson J.D."/>
            <person name="Sadow P.W."/>
            <person name="Hanna M.C."/>
            <person name="Cotton M.D."/>
            <person name="Roberts K.M."/>
            <person name="Hurst M.A."/>
            <person name="Kaine B.P."/>
            <person name="Borodovsky M."/>
            <person name="Klenk H.-P."/>
            <person name="Fraser C.M."/>
            <person name="Smith H.O."/>
            <person name="Woese C.R."/>
            <person name="Venter J.C."/>
        </authorList>
    </citation>
    <scope>NUCLEOTIDE SEQUENCE [LARGE SCALE GENOMIC DNA]</scope>
    <source>
        <strain>ATCC 43067 / DSM 2661 / JAL-1 / JCM 10045 / NBRC 100440</strain>
    </source>
</reference>
<feature type="chain" id="PRO_0000089374" description="Putative cobalt transport protein CbiM">
    <location>
        <begin position="1"/>
        <end position="233"/>
    </location>
</feature>
<feature type="transmembrane region" description="Helical" evidence="1">
    <location>
        <begin position="9"/>
        <end position="29"/>
    </location>
</feature>
<feature type="transmembrane region" description="Helical" evidence="1">
    <location>
        <begin position="43"/>
        <end position="63"/>
    </location>
</feature>
<feature type="transmembrane region" description="Helical" evidence="1">
    <location>
        <begin position="75"/>
        <end position="95"/>
    </location>
</feature>
<feature type="transmembrane region" description="Helical" evidence="1">
    <location>
        <begin position="107"/>
        <end position="127"/>
    </location>
</feature>
<feature type="transmembrane region" description="Helical" evidence="1">
    <location>
        <begin position="138"/>
        <end position="158"/>
    </location>
</feature>
<feature type="transmembrane region" description="Helical" evidence="1">
    <location>
        <begin position="177"/>
        <end position="197"/>
    </location>
</feature>
<keyword id="KW-1003">Cell membrane</keyword>
<keyword id="KW-0169">Cobalamin biosynthesis</keyword>
<keyword id="KW-0170">Cobalt</keyword>
<keyword id="KW-0171">Cobalt transport</keyword>
<keyword id="KW-0406">Ion transport</keyword>
<keyword id="KW-0472">Membrane</keyword>
<keyword id="KW-1185">Reference proteome</keyword>
<keyword id="KW-0812">Transmembrane</keyword>
<keyword id="KW-1133">Transmembrane helix</keyword>
<keyword id="KW-0813">Transport</keyword>
<protein>
    <recommendedName>
        <fullName evidence="1">Putative cobalt transport protein CbiM</fullName>
    </recommendedName>
    <alternativeName>
        <fullName evidence="1">Energy-coupling factor transporter probable substrate-capture protein CbiM</fullName>
        <shortName evidence="1">ECF transporter S component CbiM</shortName>
    </alternativeName>
</protein>
<evidence type="ECO:0000255" key="1">
    <source>
        <dbReference type="HAMAP-Rule" id="MF_01462"/>
    </source>
</evidence>
<proteinExistence type="inferred from homology"/>
<dbReference type="EMBL" id="L77117">
    <property type="protein sequence ID" value="AAB99092.1"/>
    <property type="molecule type" value="Genomic_DNA"/>
</dbReference>
<dbReference type="PIR" id="B64436">
    <property type="entry name" value="B64436"/>
</dbReference>
<dbReference type="RefSeq" id="WP_010870603.1">
    <property type="nucleotide sequence ID" value="NC_000909.1"/>
</dbReference>
<dbReference type="SMR" id="Q58491"/>
<dbReference type="STRING" id="243232.MJ_1091"/>
<dbReference type="PaxDb" id="243232-MJ_1091"/>
<dbReference type="EnsemblBacteria" id="AAB99092">
    <property type="protein sequence ID" value="AAB99092"/>
    <property type="gene ID" value="MJ_1091"/>
</dbReference>
<dbReference type="GeneID" id="1451987"/>
<dbReference type="KEGG" id="mja:MJ_1091"/>
<dbReference type="eggNOG" id="arCOG02248">
    <property type="taxonomic scope" value="Archaea"/>
</dbReference>
<dbReference type="HOGENOM" id="CLU_052508_3_0_2"/>
<dbReference type="InParanoid" id="Q58491"/>
<dbReference type="OrthoDB" id="30946at2157"/>
<dbReference type="PhylomeDB" id="Q58491"/>
<dbReference type="UniPathway" id="UPA00148"/>
<dbReference type="Proteomes" id="UP000000805">
    <property type="component" value="Chromosome"/>
</dbReference>
<dbReference type="GO" id="GO:0043190">
    <property type="term" value="C:ATP-binding cassette (ABC) transporter complex"/>
    <property type="evidence" value="ECO:0007669"/>
    <property type="project" value="InterPro"/>
</dbReference>
<dbReference type="GO" id="GO:0015087">
    <property type="term" value="F:cobalt ion transmembrane transporter activity"/>
    <property type="evidence" value="ECO:0007669"/>
    <property type="project" value="UniProtKB-UniRule"/>
</dbReference>
<dbReference type="GO" id="GO:0009236">
    <property type="term" value="P:cobalamin biosynthetic process"/>
    <property type="evidence" value="ECO:0007669"/>
    <property type="project" value="UniProtKB-UniRule"/>
</dbReference>
<dbReference type="FunFam" id="1.10.1760.20:FF:000001">
    <property type="entry name" value="Cobalt transport protein CbiM"/>
    <property type="match status" value="1"/>
</dbReference>
<dbReference type="Gene3D" id="1.10.1760.20">
    <property type="match status" value="1"/>
</dbReference>
<dbReference type="HAMAP" id="MF_01462">
    <property type="entry name" value="CbiM"/>
    <property type="match status" value="1"/>
</dbReference>
<dbReference type="InterPro" id="IPR018024">
    <property type="entry name" value="CbiM"/>
</dbReference>
<dbReference type="InterPro" id="IPR002751">
    <property type="entry name" value="CbiM/NikMN"/>
</dbReference>
<dbReference type="NCBIfam" id="TIGR00123">
    <property type="entry name" value="cbiM"/>
    <property type="match status" value="1"/>
</dbReference>
<dbReference type="NCBIfam" id="NF006184">
    <property type="entry name" value="PRK08319.1"/>
    <property type="match status" value="1"/>
</dbReference>
<dbReference type="PANTHER" id="PTHR43627">
    <property type="match status" value="1"/>
</dbReference>
<dbReference type="PANTHER" id="PTHR43627:SF1">
    <property type="entry name" value="COBALT TRANSPORT PROTEIN CBIM"/>
    <property type="match status" value="1"/>
</dbReference>
<dbReference type="Pfam" id="PF01891">
    <property type="entry name" value="CbiM"/>
    <property type="match status" value="1"/>
</dbReference>
<gene>
    <name evidence="1" type="primary">cbiM</name>
    <name type="ordered locus">MJ1091</name>
</gene>
<comment type="function">
    <text evidence="1">Part of the energy-coupling factor (ECF) transporter complex CbiMNOQ involved in cobalt import.</text>
</comment>
<comment type="pathway">
    <text evidence="1">Cofactor biosynthesis; adenosylcobalamin biosynthesis.</text>
</comment>
<comment type="subunit">
    <text evidence="1">Forms an energy-coupling factor (ECF) transporter complex composed of an ATP-binding protein (A component, CbiO), a transmembrane protein (T component, CbiQ) and 2 possible substrate-capture proteins (S components, CbiM and CbiN) of unknown stoichimetry.</text>
</comment>
<comment type="subcellular location">
    <subcellularLocation>
        <location evidence="1">Cell membrane</location>
        <topology evidence="1">Multi-pass membrane protein</topology>
    </subcellularLocation>
</comment>
<comment type="similarity">
    <text evidence="1">Belongs to the CbiM family.</text>
</comment>
<name>CBIM_METJA</name>